<evidence type="ECO:0000255" key="1">
    <source>
        <dbReference type="HAMAP-Rule" id="MF_01643"/>
    </source>
</evidence>
<evidence type="ECO:0000305" key="2"/>
<proteinExistence type="inferred from homology"/>
<accession>Q2SZW6</accession>
<protein>
    <recommendedName>
        <fullName evidence="1">Formate-dependent phosphoribosylglycinamide formyltransferase</fullName>
        <ecNumber evidence="1">6.3.1.21</ecNumber>
    </recommendedName>
    <alternativeName>
        <fullName evidence="1">5'-phosphoribosylglycinamide transformylase 2</fullName>
    </alternativeName>
    <alternativeName>
        <fullName evidence="1">Formate-dependent GAR transformylase</fullName>
    </alternativeName>
    <alternativeName>
        <fullName evidence="1">GAR transformylase 2</fullName>
        <shortName evidence="1">GART 2</shortName>
    </alternativeName>
    <alternativeName>
        <fullName evidence="1">Non-folate glycinamide ribonucleotide transformylase</fullName>
    </alternativeName>
    <alternativeName>
        <fullName evidence="1">Phosphoribosylglycinamide formyltransferase 2</fullName>
    </alternativeName>
</protein>
<organism>
    <name type="scientific">Burkholderia thailandensis (strain ATCC 700388 / DSM 13276 / CCUG 48851 / CIP 106301 / E264)</name>
    <dbReference type="NCBI Taxonomy" id="271848"/>
    <lineage>
        <taxon>Bacteria</taxon>
        <taxon>Pseudomonadati</taxon>
        <taxon>Pseudomonadota</taxon>
        <taxon>Betaproteobacteria</taxon>
        <taxon>Burkholderiales</taxon>
        <taxon>Burkholderiaceae</taxon>
        <taxon>Burkholderia</taxon>
        <taxon>pseudomallei group</taxon>
    </lineage>
</organism>
<keyword id="KW-0067">ATP-binding</keyword>
<keyword id="KW-0436">Ligase</keyword>
<keyword id="KW-0460">Magnesium</keyword>
<keyword id="KW-0479">Metal-binding</keyword>
<keyword id="KW-0547">Nucleotide-binding</keyword>
<keyword id="KW-0658">Purine biosynthesis</keyword>
<dbReference type="EC" id="6.3.1.21" evidence="1"/>
<dbReference type="EMBL" id="CP000086">
    <property type="protein sequence ID" value="ABC36350.1"/>
    <property type="status" value="ALT_INIT"/>
    <property type="molecule type" value="Genomic_DNA"/>
</dbReference>
<dbReference type="RefSeq" id="WP_009908677.1">
    <property type="nucleotide sequence ID" value="NC_007651.1"/>
</dbReference>
<dbReference type="SMR" id="Q2SZW6"/>
<dbReference type="GeneID" id="45120732"/>
<dbReference type="KEGG" id="bte:BTH_I0979"/>
<dbReference type="HOGENOM" id="CLU_011534_1_3_4"/>
<dbReference type="UniPathway" id="UPA00074">
    <property type="reaction ID" value="UER00127"/>
</dbReference>
<dbReference type="Proteomes" id="UP000001930">
    <property type="component" value="Chromosome I"/>
</dbReference>
<dbReference type="GO" id="GO:0005829">
    <property type="term" value="C:cytosol"/>
    <property type="evidence" value="ECO:0007669"/>
    <property type="project" value="TreeGrafter"/>
</dbReference>
<dbReference type="GO" id="GO:0005524">
    <property type="term" value="F:ATP binding"/>
    <property type="evidence" value="ECO:0007669"/>
    <property type="project" value="UniProtKB-UniRule"/>
</dbReference>
<dbReference type="GO" id="GO:0000287">
    <property type="term" value="F:magnesium ion binding"/>
    <property type="evidence" value="ECO:0007669"/>
    <property type="project" value="InterPro"/>
</dbReference>
<dbReference type="GO" id="GO:0043815">
    <property type="term" value="F:phosphoribosylglycinamide formyltransferase 2 activity"/>
    <property type="evidence" value="ECO:0007669"/>
    <property type="project" value="UniProtKB-UniRule"/>
</dbReference>
<dbReference type="GO" id="GO:0004644">
    <property type="term" value="F:phosphoribosylglycinamide formyltransferase activity"/>
    <property type="evidence" value="ECO:0007669"/>
    <property type="project" value="InterPro"/>
</dbReference>
<dbReference type="GO" id="GO:0006189">
    <property type="term" value="P:'de novo' IMP biosynthetic process"/>
    <property type="evidence" value="ECO:0007669"/>
    <property type="project" value="UniProtKB-UniRule"/>
</dbReference>
<dbReference type="FunFam" id="3.30.1490.20:FF:000013">
    <property type="entry name" value="Formate-dependent phosphoribosylglycinamide formyltransferase"/>
    <property type="match status" value="1"/>
</dbReference>
<dbReference type="Gene3D" id="3.40.50.20">
    <property type="match status" value="1"/>
</dbReference>
<dbReference type="Gene3D" id="3.30.1490.20">
    <property type="entry name" value="ATP-grasp fold, A domain"/>
    <property type="match status" value="1"/>
</dbReference>
<dbReference type="Gene3D" id="3.30.470.20">
    <property type="entry name" value="ATP-grasp fold, B domain"/>
    <property type="match status" value="1"/>
</dbReference>
<dbReference type="HAMAP" id="MF_01643">
    <property type="entry name" value="PurT"/>
    <property type="match status" value="1"/>
</dbReference>
<dbReference type="InterPro" id="IPR011761">
    <property type="entry name" value="ATP-grasp"/>
</dbReference>
<dbReference type="InterPro" id="IPR003135">
    <property type="entry name" value="ATP-grasp_carboxylate-amine"/>
</dbReference>
<dbReference type="InterPro" id="IPR013815">
    <property type="entry name" value="ATP_grasp_subdomain_1"/>
</dbReference>
<dbReference type="InterPro" id="IPR016185">
    <property type="entry name" value="PreATP-grasp_dom_sf"/>
</dbReference>
<dbReference type="InterPro" id="IPR005862">
    <property type="entry name" value="PurT"/>
</dbReference>
<dbReference type="InterPro" id="IPR054350">
    <property type="entry name" value="PurT/PurK_preATP-grasp"/>
</dbReference>
<dbReference type="InterPro" id="IPR048740">
    <property type="entry name" value="PurT_C"/>
</dbReference>
<dbReference type="InterPro" id="IPR011054">
    <property type="entry name" value="Rudment_hybrid_motif"/>
</dbReference>
<dbReference type="NCBIfam" id="NF006766">
    <property type="entry name" value="PRK09288.1"/>
    <property type="match status" value="1"/>
</dbReference>
<dbReference type="NCBIfam" id="TIGR01142">
    <property type="entry name" value="purT"/>
    <property type="match status" value="1"/>
</dbReference>
<dbReference type="PANTHER" id="PTHR43055">
    <property type="entry name" value="FORMATE-DEPENDENT PHOSPHORIBOSYLGLYCINAMIDE FORMYLTRANSFERASE"/>
    <property type="match status" value="1"/>
</dbReference>
<dbReference type="PANTHER" id="PTHR43055:SF1">
    <property type="entry name" value="FORMATE-DEPENDENT PHOSPHORIBOSYLGLYCINAMIDE FORMYLTRANSFERASE"/>
    <property type="match status" value="1"/>
</dbReference>
<dbReference type="Pfam" id="PF02222">
    <property type="entry name" value="ATP-grasp"/>
    <property type="match status" value="1"/>
</dbReference>
<dbReference type="Pfam" id="PF21244">
    <property type="entry name" value="PurT_C"/>
    <property type="match status" value="1"/>
</dbReference>
<dbReference type="Pfam" id="PF22660">
    <property type="entry name" value="RS_preATP-grasp-like"/>
    <property type="match status" value="1"/>
</dbReference>
<dbReference type="SUPFAM" id="SSF56059">
    <property type="entry name" value="Glutathione synthetase ATP-binding domain-like"/>
    <property type="match status" value="1"/>
</dbReference>
<dbReference type="SUPFAM" id="SSF52440">
    <property type="entry name" value="PreATP-grasp domain"/>
    <property type="match status" value="1"/>
</dbReference>
<dbReference type="SUPFAM" id="SSF51246">
    <property type="entry name" value="Rudiment single hybrid motif"/>
    <property type="match status" value="1"/>
</dbReference>
<dbReference type="PROSITE" id="PS50975">
    <property type="entry name" value="ATP_GRASP"/>
    <property type="match status" value="1"/>
</dbReference>
<name>PURT_BURTA</name>
<comment type="function">
    <text evidence="1">Involved in the de novo purine biosynthesis. Catalyzes the transfer of formate to 5-phospho-ribosyl-glycinamide (GAR), producing 5-phospho-ribosyl-N-formylglycinamide (FGAR). Formate is provided by PurU via hydrolysis of 10-formyl-tetrahydrofolate.</text>
</comment>
<comment type="catalytic activity">
    <reaction evidence="1">
        <text>N(1)-(5-phospho-beta-D-ribosyl)glycinamide + formate + ATP = N(2)-formyl-N(1)-(5-phospho-beta-D-ribosyl)glycinamide + ADP + phosphate + H(+)</text>
        <dbReference type="Rhea" id="RHEA:24829"/>
        <dbReference type="ChEBI" id="CHEBI:15378"/>
        <dbReference type="ChEBI" id="CHEBI:15740"/>
        <dbReference type="ChEBI" id="CHEBI:30616"/>
        <dbReference type="ChEBI" id="CHEBI:43474"/>
        <dbReference type="ChEBI" id="CHEBI:143788"/>
        <dbReference type="ChEBI" id="CHEBI:147286"/>
        <dbReference type="ChEBI" id="CHEBI:456216"/>
        <dbReference type="EC" id="6.3.1.21"/>
    </reaction>
    <physiologicalReaction direction="left-to-right" evidence="1">
        <dbReference type="Rhea" id="RHEA:24830"/>
    </physiologicalReaction>
</comment>
<comment type="pathway">
    <text evidence="1">Purine metabolism; IMP biosynthesis via de novo pathway; N(2)-formyl-N(1)-(5-phospho-D-ribosyl)glycinamide from N(1)-(5-phospho-D-ribosyl)glycinamide (formate route): step 1/1.</text>
</comment>
<comment type="subunit">
    <text evidence="1">Homodimer.</text>
</comment>
<comment type="similarity">
    <text evidence="1">Belongs to the PurK/PurT family.</text>
</comment>
<comment type="sequence caution" evidence="2">
    <conflict type="erroneous initiation">
        <sequence resource="EMBL-CDS" id="ABC36350"/>
    </conflict>
</comment>
<gene>
    <name evidence="1" type="primary">purT</name>
    <name type="ordered locus">BTH_I0979</name>
</gene>
<feature type="chain" id="PRO_0000319146" description="Formate-dependent phosphoribosylglycinamide formyltransferase">
    <location>
        <begin position="1"/>
        <end position="404"/>
    </location>
</feature>
<feature type="domain" description="ATP-grasp" evidence="1">
    <location>
        <begin position="123"/>
        <end position="318"/>
    </location>
</feature>
<feature type="binding site" evidence="1">
    <location>
        <begin position="25"/>
        <end position="26"/>
    </location>
    <ligand>
        <name>N(1)-(5-phospho-beta-D-ribosyl)glycinamide</name>
        <dbReference type="ChEBI" id="CHEBI:143788"/>
    </ligand>
</feature>
<feature type="binding site" evidence="1">
    <location>
        <position position="85"/>
    </location>
    <ligand>
        <name>N(1)-(5-phospho-beta-D-ribosyl)glycinamide</name>
        <dbReference type="ChEBI" id="CHEBI:143788"/>
    </ligand>
</feature>
<feature type="binding site" evidence="1">
    <location>
        <position position="118"/>
    </location>
    <ligand>
        <name>ATP</name>
        <dbReference type="ChEBI" id="CHEBI:30616"/>
    </ligand>
</feature>
<feature type="binding site" evidence="1">
    <location>
        <position position="159"/>
    </location>
    <ligand>
        <name>ATP</name>
        <dbReference type="ChEBI" id="CHEBI:30616"/>
    </ligand>
</feature>
<feature type="binding site" evidence="1">
    <location>
        <begin position="164"/>
        <end position="169"/>
    </location>
    <ligand>
        <name>ATP</name>
        <dbReference type="ChEBI" id="CHEBI:30616"/>
    </ligand>
</feature>
<feature type="binding site" evidence="1">
    <location>
        <begin position="199"/>
        <end position="202"/>
    </location>
    <ligand>
        <name>ATP</name>
        <dbReference type="ChEBI" id="CHEBI:30616"/>
    </ligand>
</feature>
<feature type="binding site" evidence="1">
    <location>
        <position position="207"/>
    </location>
    <ligand>
        <name>ATP</name>
        <dbReference type="ChEBI" id="CHEBI:30616"/>
    </ligand>
</feature>
<feature type="binding site" evidence="1">
    <location>
        <position position="277"/>
    </location>
    <ligand>
        <name>Mg(2+)</name>
        <dbReference type="ChEBI" id="CHEBI:18420"/>
    </ligand>
</feature>
<feature type="binding site" evidence="1">
    <location>
        <position position="289"/>
    </location>
    <ligand>
        <name>Mg(2+)</name>
        <dbReference type="ChEBI" id="CHEBI:18420"/>
    </ligand>
</feature>
<feature type="binding site" evidence="1">
    <location>
        <position position="296"/>
    </location>
    <ligand>
        <name>N(1)-(5-phospho-beta-D-ribosyl)glycinamide</name>
        <dbReference type="ChEBI" id="CHEBI:143788"/>
    </ligand>
</feature>
<feature type="binding site" evidence="1">
    <location>
        <position position="365"/>
    </location>
    <ligand>
        <name>N(1)-(5-phospho-beta-D-ribosyl)glycinamide</name>
        <dbReference type="ChEBI" id="CHEBI:143788"/>
    </ligand>
</feature>
<feature type="binding site" evidence="1">
    <location>
        <begin position="372"/>
        <end position="373"/>
    </location>
    <ligand>
        <name>N(1)-(5-phospho-beta-D-ribosyl)glycinamide</name>
        <dbReference type="ChEBI" id="CHEBI:143788"/>
    </ligand>
</feature>
<sequence>MQIGQRLGTPLSPSATRVMLLGAGELGKEVIIALQRLGVEVIAVDRYPNAPGHQVAHRAHVIDMTDPDALRALVDAERAHLVVPEIEAIATDALAEIEAAGVAEVIPTARATQLTMNREGIRRLAAEELGLPTSPYAFAQSFDAFRAAVAQIGFPCVVKPVMSSSGKGQSVVRSDADVEPAWQYAMAGGRVNHGRVIVEGFVQFDYEITQLTVRAIDPASLKTRTYFCEPIGHVQVAGDYVESWQPQPMSAKALERSRDIAHRVTSALGGRGIFGVELFVRGDDVWFSEVSPRPHDTGLVTLASQRQSEFELHARAILGLPVEPALATPAASAVIYGGLDEAGIAFEGVRDALAVPGADLRLFGKPESFAKRRMGVALATGANVDEARERAKRAAAAVRPVSAR</sequence>
<reference key="1">
    <citation type="journal article" date="2005" name="BMC Genomics">
        <title>Bacterial genome adaptation to niches: divergence of the potential virulence genes in three Burkholderia species of different survival strategies.</title>
        <authorList>
            <person name="Kim H.S."/>
            <person name="Schell M.A."/>
            <person name="Yu Y."/>
            <person name="Ulrich R.L."/>
            <person name="Sarria S.H."/>
            <person name="Nierman W.C."/>
            <person name="DeShazer D."/>
        </authorList>
    </citation>
    <scope>NUCLEOTIDE SEQUENCE [LARGE SCALE GENOMIC DNA]</scope>
    <source>
        <strain>ATCC 700388 / DSM 13276 / CCUG 48851 / CIP 106301 / E264</strain>
    </source>
</reference>